<name>Y3728_DELAS</name>
<comment type="similarity">
    <text evidence="1">Belongs to the UPF0145 family.</text>
</comment>
<gene>
    <name type="ordered locus">Daci_3728</name>
</gene>
<reference key="1">
    <citation type="submission" date="2007-11" db="EMBL/GenBank/DDBJ databases">
        <title>Complete sequence of Delftia acidovorans DSM 14801 / SPH-1.</title>
        <authorList>
            <person name="Copeland A."/>
            <person name="Lucas S."/>
            <person name="Lapidus A."/>
            <person name="Barry K."/>
            <person name="Glavina del Rio T."/>
            <person name="Dalin E."/>
            <person name="Tice H."/>
            <person name="Pitluck S."/>
            <person name="Lowry S."/>
            <person name="Clum A."/>
            <person name="Schmutz J."/>
            <person name="Larimer F."/>
            <person name="Land M."/>
            <person name="Hauser L."/>
            <person name="Kyrpides N."/>
            <person name="Kim E."/>
            <person name="Schleheck D."/>
            <person name="Richardson P."/>
        </authorList>
    </citation>
    <scope>NUCLEOTIDE SEQUENCE [LARGE SCALE GENOMIC DNA]</scope>
    <source>
        <strain>DSM 14801 / SPH-1</strain>
    </source>
</reference>
<dbReference type="EMBL" id="CP000884">
    <property type="protein sequence ID" value="ABX36360.1"/>
    <property type="molecule type" value="Genomic_DNA"/>
</dbReference>
<dbReference type="RefSeq" id="WP_012205554.1">
    <property type="nucleotide sequence ID" value="NC_010002.1"/>
</dbReference>
<dbReference type="SMR" id="A9C2L1"/>
<dbReference type="KEGG" id="dac:Daci_3728"/>
<dbReference type="eggNOG" id="COG0393">
    <property type="taxonomic scope" value="Bacteria"/>
</dbReference>
<dbReference type="HOGENOM" id="CLU_117144_3_2_4"/>
<dbReference type="Proteomes" id="UP000000784">
    <property type="component" value="Chromosome"/>
</dbReference>
<dbReference type="Gene3D" id="3.30.110.70">
    <property type="entry name" value="Hypothetical protein apc22750. Chain B"/>
    <property type="match status" value="1"/>
</dbReference>
<dbReference type="HAMAP" id="MF_00338">
    <property type="entry name" value="UPF0145"/>
    <property type="match status" value="1"/>
</dbReference>
<dbReference type="InterPro" id="IPR035439">
    <property type="entry name" value="UPF0145_dom_sf"/>
</dbReference>
<dbReference type="InterPro" id="IPR002765">
    <property type="entry name" value="UPF0145_YbjQ-like"/>
</dbReference>
<dbReference type="NCBIfam" id="NF002776">
    <property type="entry name" value="PRK02877.1"/>
    <property type="match status" value="1"/>
</dbReference>
<dbReference type="PANTHER" id="PTHR34068">
    <property type="entry name" value="UPF0145 PROTEIN YBJQ"/>
    <property type="match status" value="1"/>
</dbReference>
<dbReference type="PANTHER" id="PTHR34068:SF1">
    <property type="entry name" value="UPF0145 PROTEIN YBJQ"/>
    <property type="match status" value="1"/>
</dbReference>
<dbReference type="Pfam" id="PF01906">
    <property type="entry name" value="YbjQ_1"/>
    <property type="match status" value="1"/>
</dbReference>
<dbReference type="SUPFAM" id="SSF117782">
    <property type="entry name" value="YbjQ-like"/>
    <property type="match status" value="1"/>
</dbReference>
<protein>
    <recommendedName>
        <fullName evidence="1">UPF0145 protein Daci_3728</fullName>
    </recommendedName>
</protein>
<proteinExistence type="inferred from homology"/>
<keyword id="KW-1185">Reference proteome</keyword>
<evidence type="ECO:0000255" key="1">
    <source>
        <dbReference type="HAMAP-Rule" id="MF_00338"/>
    </source>
</evidence>
<sequence length="106" mass="11383">MIITTTPQIEGRRITRYCGVVAGEAILGANVFKDLFAGLRDIVGGRSATYERELQRAREIALKELEERAQELGANAVVGVDLDYEVLGQGNGMLMVSASGTAVVLE</sequence>
<feature type="chain" id="PRO_1000119988" description="UPF0145 protein Daci_3728">
    <location>
        <begin position="1"/>
        <end position="106"/>
    </location>
</feature>
<organism>
    <name type="scientific">Delftia acidovorans (strain DSM 14801 / SPH-1)</name>
    <dbReference type="NCBI Taxonomy" id="398578"/>
    <lineage>
        <taxon>Bacteria</taxon>
        <taxon>Pseudomonadati</taxon>
        <taxon>Pseudomonadota</taxon>
        <taxon>Betaproteobacteria</taxon>
        <taxon>Burkholderiales</taxon>
        <taxon>Comamonadaceae</taxon>
        <taxon>Delftia</taxon>
    </lineage>
</organism>
<accession>A9C2L1</accession>